<name>RL30_FRATN</name>
<accession>A0Q4K1</accession>
<protein>
    <recommendedName>
        <fullName evidence="1">Large ribosomal subunit protein uL30</fullName>
    </recommendedName>
    <alternativeName>
        <fullName evidence="2">50S ribosomal protein L30</fullName>
    </alternativeName>
</protein>
<organism>
    <name type="scientific">Francisella tularensis subsp. novicida (strain U112)</name>
    <dbReference type="NCBI Taxonomy" id="401614"/>
    <lineage>
        <taxon>Bacteria</taxon>
        <taxon>Pseudomonadati</taxon>
        <taxon>Pseudomonadota</taxon>
        <taxon>Gammaproteobacteria</taxon>
        <taxon>Thiotrichales</taxon>
        <taxon>Francisellaceae</taxon>
        <taxon>Francisella</taxon>
    </lineage>
</organism>
<proteinExistence type="inferred from homology"/>
<reference key="1">
    <citation type="journal article" date="2007" name="Genome Biol.">
        <title>Comparison of Francisella tularensis genomes reveals evolutionary events associated with the emergence of human pathogenic strains.</title>
        <authorList>
            <person name="Rohmer L."/>
            <person name="Fong C."/>
            <person name="Abmayr S."/>
            <person name="Wasnick M."/>
            <person name="Larson Freeman T.J."/>
            <person name="Radey M."/>
            <person name="Guina T."/>
            <person name="Svensson K."/>
            <person name="Hayden H.S."/>
            <person name="Jacobs M."/>
            <person name="Gallagher L.A."/>
            <person name="Manoil C."/>
            <person name="Ernst R.K."/>
            <person name="Drees B."/>
            <person name="Buckley D."/>
            <person name="Haugen E."/>
            <person name="Bovee D."/>
            <person name="Zhou Y."/>
            <person name="Chang J."/>
            <person name="Levy R."/>
            <person name="Lim R."/>
            <person name="Gillett W."/>
            <person name="Guenthener D."/>
            <person name="Kang A."/>
            <person name="Shaffer S.A."/>
            <person name="Taylor G."/>
            <person name="Chen J."/>
            <person name="Gallis B."/>
            <person name="D'Argenio D.A."/>
            <person name="Forsman M."/>
            <person name="Olson M.V."/>
            <person name="Goodlett D.R."/>
            <person name="Kaul R."/>
            <person name="Miller S.I."/>
            <person name="Brittnacher M.J."/>
        </authorList>
    </citation>
    <scope>NUCLEOTIDE SEQUENCE [LARGE SCALE GENOMIC DNA]</scope>
    <source>
        <strain>U112</strain>
    </source>
</reference>
<evidence type="ECO:0000255" key="1">
    <source>
        <dbReference type="HAMAP-Rule" id="MF_01371"/>
    </source>
</evidence>
<evidence type="ECO:0000305" key="2"/>
<dbReference type="EMBL" id="CP000439">
    <property type="protein sequence ID" value="ABK89166.1"/>
    <property type="molecule type" value="Genomic_DNA"/>
</dbReference>
<dbReference type="RefSeq" id="WP_003014363.1">
    <property type="nucleotide sequence ID" value="NZ_CP009633.1"/>
</dbReference>
<dbReference type="SMR" id="A0Q4K1"/>
<dbReference type="GeneID" id="75264243"/>
<dbReference type="KEGG" id="ftn:FTN_0257"/>
<dbReference type="KEGG" id="ftx:AW25_1785"/>
<dbReference type="BioCyc" id="FTUL401614:G1G75-268-MONOMER"/>
<dbReference type="Proteomes" id="UP000000762">
    <property type="component" value="Chromosome"/>
</dbReference>
<dbReference type="GO" id="GO:0022625">
    <property type="term" value="C:cytosolic large ribosomal subunit"/>
    <property type="evidence" value="ECO:0007669"/>
    <property type="project" value="TreeGrafter"/>
</dbReference>
<dbReference type="GO" id="GO:0003735">
    <property type="term" value="F:structural constituent of ribosome"/>
    <property type="evidence" value="ECO:0007669"/>
    <property type="project" value="InterPro"/>
</dbReference>
<dbReference type="GO" id="GO:0006412">
    <property type="term" value="P:translation"/>
    <property type="evidence" value="ECO:0007669"/>
    <property type="project" value="UniProtKB-UniRule"/>
</dbReference>
<dbReference type="CDD" id="cd01658">
    <property type="entry name" value="Ribosomal_L30"/>
    <property type="match status" value="1"/>
</dbReference>
<dbReference type="FunFam" id="3.30.1390.20:FF:000001">
    <property type="entry name" value="50S ribosomal protein L30"/>
    <property type="match status" value="1"/>
</dbReference>
<dbReference type="Gene3D" id="3.30.1390.20">
    <property type="entry name" value="Ribosomal protein L30, ferredoxin-like fold domain"/>
    <property type="match status" value="1"/>
</dbReference>
<dbReference type="HAMAP" id="MF_01371_B">
    <property type="entry name" value="Ribosomal_uL30_B"/>
    <property type="match status" value="1"/>
</dbReference>
<dbReference type="InterPro" id="IPR036919">
    <property type="entry name" value="Ribo_uL30_ferredoxin-like_sf"/>
</dbReference>
<dbReference type="InterPro" id="IPR005996">
    <property type="entry name" value="Ribosomal_uL30_bac-type"/>
</dbReference>
<dbReference type="InterPro" id="IPR016082">
    <property type="entry name" value="Ribosomal_uL30_ferredoxin-like"/>
</dbReference>
<dbReference type="NCBIfam" id="TIGR01308">
    <property type="entry name" value="rpmD_bact"/>
    <property type="match status" value="1"/>
</dbReference>
<dbReference type="PANTHER" id="PTHR15892:SF2">
    <property type="entry name" value="LARGE RIBOSOMAL SUBUNIT PROTEIN UL30M"/>
    <property type="match status" value="1"/>
</dbReference>
<dbReference type="PANTHER" id="PTHR15892">
    <property type="entry name" value="MITOCHONDRIAL RIBOSOMAL PROTEIN L30"/>
    <property type="match status" value="1"/>
</dbReference>
<dbReference type="Pfam" id="PF00327">
    <property type="entry name" value="Ribosomal_L30"/>
    <property type="match status" value="1"/>
</dbReference>
<dbReference type="PIRSF" id="PIRSF002211">
    <property type="entry name" value="Ribosomal_L30_bac-type"/>
    <property type="match status" value="1"/>
</dbReference>
<dbReference type="SUPFAM" id="SSF55129">
    <property type="entry name" value="Ribosomal protein L30p/L7e"/>
    <property type="match status" value="1"/>
</dbReference>
<feature type="chain" id="PRO_1000056042" description="Large ribosomal subunit protein uL30">
    <location>
        <begin position="1"/>
        <end position="61"/>
    </location>
</feature>
<gene>
    <name evidence="1" type="primary">rpmD</name>
    <name type="ordered locus">FTN_0257</name>
</gene>
<keyword id="KW-0687">Ribonucleoprotein</keyword>
<keyword id="KW-0689">Ribosomal protein</keyword>
<sequence length="61" mass="6871">MTQAKTFKVTLVKSLIGRKENHIASARGLGLRKINHTVEVLDTPENRGMANKIYYMVKIEG</sequence>
<comment type="subunit">
    <text evidence="1">Part of the 50S ribosomal subunit.</text>
</comment>
<comment type="similarity">
    <text evidence="1">Belongs to the universal ribosomal protein uL30 family.</text>
</comment>